<evidence type="ECO:0000250" key="1">
    <source>
        <dbReference type="UniProtKB" id="Q9U6Y8"/>
    </source>
</evidence>
<evidence type="ECO:0000269" key="2">
    <source>
    </source>
</evidence>
<evidence type="ECO:0000305" key="3"/>
<evidence type="ECO:0000312" key="4">
    <source>
        <dbReference type="EMBL" id="AAF03374.1"/>
    </source>
</evidence>
<evidence type="ECO:0007829" key="5">
    <source>
        <dbReference type="PDB" id="2OTE"/>
    </source>
</evidence>
<evidence type="ECO:0007829" key="6">
    <source>
        <dbReference type="PDB" id="4Q9W"/>
    </source>
</evidence>
<evidence type="ECO:0007829" key="7">
    <source>
        <dbReference type="PDB" id="6FP7"/>
    </source>
</evidence>
<reference evidence="3 4" key="1">
    <citation type="journal article" date="1999" name="Nat. Biotechnol.">
        <title>Fluorescent proteins from nonbioluminescent Anthozoa species.</title>
        <authorList>
            <person name="Matz M.V."/>
            <person name="Fradkov A.F."/>
            <person name="Labas Y.A."/>
            <person name="Savitsky A.P."/>
            <person name="Zaraisky A.G."/>
            <person name="Markelov M.L."/>
            <person name="Lukyanov S.A."/>
        </authorList>
    </citation>
    <scope>NUCLEOTIDE SEQUENCE [MRNA]</scope>
    <scope>FUNCTION</scope>
    <scope>TISSUE SPECIFICITY</scope>
</reference>
<keyword id="KW-0002">3D-structure</keyword>
<keyword id="KW-0157">Chromophore</keyword>
<keyword id="KW-0455">Luminescence</keyword>
<keyword id="KW-0599">Photoprotein</keyword>
<comment type="function">
    <text evidence="2">Pigment protein that is green in color.</text>
</comment>
<comment type="biophysicochemical properties">
    <absorption>
        <max>458 nm</max>
        <text>Has a strong fluorescence emission spectrum which peaks at 486 nm.</text>
    </absorption>
</comment>
<comment type="tissue specificity">
    <text evidence="2">Tentacle and oral disk.</text>
</comment>
<comment type="PTM">
    <text>Contains a chromophore consisting of modified amino acid residues. The chromophore is formed by autocatalytic backbone condensation between Xaa-N and Gly-(N+2), oxidation of Tyr-(N+1) to didehydrotyrosine, and formation of a double bond to the alpha-amino nitrogen of residue Xaa-N. Maturation of the chromophore requires nothing other than molecular oxygen. The precise stereochemistry of the tyrosine has not been determined.</text>
</comment>
<comment type="biotechnology">
    <text evidence="3">Fluorescent proteins have become a useful and ubiquitous tool for making chimeric proteins, where they function as a fluorescent protein tag. Typically they tolerate N- and C-terminal fusion to a broad variety of proteins. They have been expressed in most known cell types and are used as a noninvasive fluorescent marker in living cells and organisms. They enable a wide range of applications where they have functioned as a cell lineage tracer, reporter of gene expression, or as a measure of protein-protein interactions.</text>
</comment>
<comment type="similarity">
    <text evidence="2">Belongs to the GFP family.</text>
</comment>
<proteinExistence type="evidence at protein level"/>
<feature type="chain" id="PRO_0000192580" description="GFP-like fluorescent chromoprotein cFP484">
    <location>
        <begin position="1"/>
        <end position="266"/>
    </location>
</feature>
<feature type="modified residue" description="2,3-didehydrotyrosine" evidence="1">
    <location>
        <position position="105"/>
    </location>
</feature>
<feature type="cross-link" description="2-iminomethyl-5-imidazolinone (Gln-Gly)" evidence="1">
    <location>
        <begin position="104"/>
        <end position="106"/>
    </location>
</feature>
<feature type="turn" evidence="7">
    <location>
        <begin position="41"/>
        <end position="45"/>
    </location>
</feature>
<feature type="strand" evidence="6">
    <location>
        <begin position="48"/>
        <end position="60"/>
    </location>
</feature>
<feature type="strand" evidence="6">
    <location>
        <begin position="63"/>
        <end position="74"/>
    </location>
</feature>
<feature type="turn" evidence="6">
    <location>
        <begin position="75"/>
        <end position="78"/>
    </location>
</feature>
<feature type="strand" evidence="6">
    <location>
        <begin position="79"/>
        <end position="89"/>
    </location>
</feature>
<feature type="helix" evidence="6">
    <location>
        <begin position="97"/>
        <end position="100"/>
    </location>
</feature>
<feature type="strand" evidence="5">
    <location>
        <begin position="110"/>
        <end position="112"/>
    </location>
</feature>
<feature type="helix" evidence="6">
    <location>
        <begin position="120"/>
        <end position="123"/>
    </location>
</feature>
<feature type="turn" evidence="6">
    <location>
        <begin position="124"/>
        <end position="127"/>
    </location>
</feature>
<feature type="strand" evidence="6">
    <location>
        <begin position="129"/>
        <end position="137"/>
    </location>
</feature>
<feature type="strand" evidence="6">
    <location>
        <begin position="142"/>
        <end position="152"/>
    </location>
</feature>
<feature type="strand" evidence="6">
    <location>
        <begin position="155"/>
        <end position="165"/>
    </location>
</feature>
<feature type="turn" evidence="6">
    <location>
        <begin position="172"/>
        <end position="176"/>
    </location>
</feature>
<feature type="strand" evidence="6">
    <location>
        <begin position="178"/>
        <end position="181"/>
    </location>
</feature>
<feature type="strand" evidence="6">
    <location>
        <begin position="184"/>
        <end position="191"/>
    </location>
</feature>
<feature type="strand" evidence="6">
    <location>
        <begin position="194"/>
        <end position="205"/>
    </location>
</feature>
<feature type="strand" evidence="6">
    <location>
        <begin position="210"/>
        <end position="223"/>
    </location>
</feature>
<feature type="strand" evidence="6">
    <location>
        <begin position="230"/>
        <end position="242"/>
    </location>
</feature>
<feature type="strand" evidence="6">
    <location>
        <begin position="246"/>
        <end position="260"/>
    </location>
</feature>
<protein>
    <recommendedName>
        <fullName>GFP-like fluorescent chromoprotein cFP484</fullName>
    </recommendedName>
</protein>
<accession>Q9U6Y3</accession>
<dbReference type="EMBL" id="AF168424">
    <property type="protein sequence ID" value="AAF03374.1"/>
    <property type="molecule type" value="mRNA"/>
</dbReference>
<dbReference type="PDB" id="2HQK">
    <property type="method" value="X-ray"/>
    <property type="resolution" value="1.19 A"/>
    <property type="chains" value="A=44-266"/>
</dbReference>
<dbReference type="PDB" id="2OTB">
    <property type="method" value="X-ray"/>
    <property type="resolution" value="1.79 A"/>
    <property type="chains" value="A/B=44-259"/>
</dbReference>
<dbReference type="PDB" id="2OTE">
    <property type="method" value="X-ray"/>
    <property type="resolution" value="1.47 A"/>
    <property type="chains" value="A/B=44-259"/>
</dbReference>
<dbReference type="PDB" id="4Q9W">
    <property type="method" value="X-ray"/>
    <property type="resolution" value="1.00 A"/>
    <property type="chains" value="A/B=44-260"/>
</dbReference>
<dbReference type="PDB" id="4Q9X">
    <property type="method" value="X-ray"/>
    <property type="resolution" value="1.90 A"/>
    <property type="chains" value="A=44-260"/>
</dbReference>
<dbReference type="PDB" id="4R6D">
    <property type="method" value="X-ray"/>
    <property type="resolution" value="1.55 A"/>
    <property type="chains" value="A=44-258"/>
</dbReference>
<dbReference type="PDB" id="6FP7">
    <property type="method" value="X-ray"/>
    <property type="resolution" value="1.58 A"/>
    <property type="chains" value="A=41-260"/>
</dbReference>
<dbReference type="PDB" id="6FP8">
    <property type="method" value="X-ray"/>
    <property type="resolution" value="1.85 A"/>
    <property type="chains" value="A=41-260"/>
</dbReference>
<dbReference type="PDB" id="6QSL">
    <property type="method" value="X-ray"/>
    <property type="resolution" value="1.60 A"/>
    <property type="chains" value="A=44-260"/>
</dbReference>
<dbReference type="PDB" id="6QSM">
    <property type="method" value="X-ray"/>
    <property type="resolution" value="1.65 A"/>
    <property type="chains" value="A=44-260"/>
</dbReference>
<dbReference type="PDB" id="6QSO">
    <property type="method" value="X-ray"/>
    <property type="resolution" value="1.80 A"/>
    <property type="chains" value="A=44-260"/>
</dbReference>
<dbReference type="PDB" id="8IMX">
    <property type="method" value="EM"/>
    <property type="resolution" value="2.85 A"/>
    <property type="chains" value="T=45-260"/>
</dbReference>
<dbReference type="PDB" id="8IMY">
    <property type="method" value="EM"/>
    <property type="resolution" value="3.22 A"/>
    <property type="chains" value="G/K/S/T/U=45-260"/>
</dbReference>
<dbReference type="PDBsum" id="2HQK"/>
<dbReference type="PDBsum" id="2OTB"/>
<dbReference type="PDBsum" id="2OTE"/>
<dbReference type="PDBsum" id="4Q9W"/>
<dbReference type="PDBsum" id="4Q9X"/>
<dbReference type="PDBsum" id="4R6D"/>
<dbReference type="PDBsum" id="6FP7"/>
<dbReference type="PDBsum" id="6FP8"/>
<dbReference type="PDBsum" id="6QSL"/>
<dbReference type="PDBsum" id="6QSM"/>
<dbReference type="PDBsum" id="6QSO"/>
<dbReference type="PDBsum" id="8IMX"/>
<dbReference type="PDBsum" id="8IMY"/>
<dbReference type="EMDB" id="EMD-35575"/>
<dbReference type="EMDB" id="EMD-35576"/>
<dbReference type="SMR" id="Q9U6Y3"/>
<dbReference type="ABCD" id="Q9U6Y3">
    <property type="antibodies" value="5 sequenced antibodies"/>
</dbReference>
<dbReference type="EvolutionaryTrace" id="Q9U6Y3"/>
<dbReference type="GO" id="GO:0008218">
    <property type="term" value="P:bioluminescence"/>
    <property type="evidence" value="ECO:0007669"/>
    <property type="project" value="UniProtKB-KW"/>
</dbReference>
<dbReference type="GO" id="GO:0006091">
    <property type="term" value="P:generation of precursor metabolites and energy"/>
    <property type="evidence" value="ECO:0007669"/>
    <property type="project" value="InterPro"/>
</dbReference>
<dbReference type="Gene3D" id="3.30.1300.40">
    <property type="match status" value="1"/>
</dbReference>
<dbReference type="Gene3D" id="2.40.155.10">
    <property type="entry name" value="Green fluorescent protein"/>
    <property type="match status" value="1"/>
</dbReference>
<dbReference type="InterPro" id="IPR009017">
    <property type="entry name" value="GFP"/>
</dbReference>
<dbReference type="InterPro" id="IPR011584">
    <property type="entry name" value="GFP-related"/>
</dbReference>
<dbReference type="InterPro" id="IPR000786">
    <property type="entry name" value="Green_fluorescent_prot"/>
</dbReference>
<dbReference type="Pfam" id="PF01353">
    <property type="entry name" value="GFP"/>
    <property type="match status" value="1"/>
</dbReference>
<dbReference type="PRINTS" id="PR01229">
    <property type="entry name" value="GFLUORESCENT"/>
</dbReference>
<dbReference type="SUPFAM" id="SSF54511">
    <property type="entry name" value="GFP-like"/>
    <property type="match status" value="1"/>
</dbReference>
<sequence>MKCKFVFCLSFLVLAITNANIFLRNEADLEEKTLRIPKALTTMGVIKPDMKIKLKMEGNVNGHAFVIEGEGEGKPYDGTHTLNLEVKEGAPLPFSYDILSNAFQYGNRALTKYPDDIADYFKQSFPEGYSWERTMTFEDKGIVKVKSDISMEEDSFIYEIRFDGMNFPPNGPVMQKKTLKWEPSTEIMYVRDGVLVGDISHSLLLEGGGHYRCDFKSIYKAKKVVKLPDYHFVDHRIEILNHDKDYNKVTLYENAVARYSLLPSQA</sequence>
<organism>
    <name type="scientific">Clavularia sp.</name>
    <name type="common">Brown star polyp</name>
    <dbReference type="NCBI Taxonomy" id="86521"/>
    <lineage>
        <taxon>Eukaryota</taxon>
        <taxon>Metazoa</taxon>
        <taxon>Cnidaria</taxon>
        <taxon>Anthozoa</taxon>
        <taxon>Octocorallia</taxon>
        <taxon>Malacalcyonacea</taxon>
        <taxon>Clavulariidae</taxon>
        <taxon>Clavularia</taxon>
    </lineage>
</organism>
<name>GFPL_CLASP</name>